<evidence type="ECO:0000255" key="1">
    <source>
        <dbReference type="HAMAP-Rule" id="MF_00165"/>
    </source>
</evidence>
<gene>
    <name evidence="1" type="primary">tmk</name>
    <name type="ordered locus">SUN_1354</name>
</gene>
<keyword id="KW-0067">ATP-binding</keyword>
<keyword id="KW-0418">Kinase</keyword>
<keyword id="KW-0545">Nucleotide biosynthesis</keyword>
<keyword id="KW-0547">Nucleotide-binding</keyword>
<keyword id="KW-0808">Transferase</keyword>
<organism>
    <name type="scientific">Sulfurovum sp. (strain NBC37-1)</name>
    <dbReference type="NCBI Taxonomy" id="387093"/>
    <lineage>
        <taxon>Bacteria</taxon>
        <taxon>Pseudomonadati</taxon>
        <taxon>Campylobacterota</taxon>
        <taxon>Epsilonproteobacteria</taxon>
        <taxon>Campylobacterales</taxon>
        <taxon>Sulfurovaceae</taxon>
        <taxon>Sulfurovum</taxon>
    </lineage>
</organism>
<name>KTHY_SULNB</name>
<feature type="chain" id="PRO_1000123596" description="Thymidylate kinase">
    <location>
        <begin position="1"/>
        <end position="191"/>
    </location>
</feature>
<feature type="binding site" evidence="1">
    <location>
        <begin position="7"/>
        <end position="14"/>
    </location>
    <ligand>
        <name>ATP</name>
        <dbReference type="ChEBI" id="CHEBI:30616"/>
    </ligand>
</feature>
<protein>
    <recommendedName>
        <fullName evidence="1">Thymidylate kinase</fullName>
        <ecNumber evidence="1">2.7.4.9</ecNumber>
    </recommendedName>
    <alternativeName>
        <fullName evidence="1">dTMP kinase</fullName>
    </alternativeName>
</protein>
<proteinExistence type="inferred from homology"/>
<sequence length="191" mass="21773">MYILFEGIDTCGKSTQMELLTQKHPGIITTHEPGGTAFGQQAREILLSDSLRSKRAELLLFLADRAEHYEEVVEPNHDKIVVSDRGFVSGIGYALANGDFDFDELVALNRFALKDHFPDRIILFMTDMETLKQRISEKELDGIELRGLEYLLRVQEHMKESILKLGIPHLFIDATDSIENIHQSILTYLKV</sequence>
<comment type="function">
    <text evidence="1">Phosphorylation of dTMP to form dTDP in both de novo and salvage pathways of dTTP synthesis.</text>
</comment>
<comment type="catalytic activity">
    <reaction evidence="1">
        <text>dTMP + ATP = dTDP + ADP</text>
        <dbReference type="Rhea" id="RHEA:13517"/>
        <dbReference type="ChEBI" id="CHEBI:30616"/>
        <dbReference type="ChEBI" id="CHEBI:58369"/>
        <dbReference type="ChEBI" id="CHEBI:63528"/>
        <dbReference type="ChEBI" id="CHEBI:456216"/>
        <dbReference type="EC" id="2.7.4.9"/>
    </reaction>
</comment>
<comment type="similarity">
    <text evidence="1">Belongs to the thymidylate kinase family.</text>
</comment>
<reference key="1">
    <citation type="journal article" date="2007" name="Proc. Natl. Acad. Sci. U.S.A.">
        <title>Deep-sea vent epsilon-proteobacterial genomes provide insights into emergence of pathogens.</title>
        <authorList>
            <person name="Nakagawa S."/>
            <person name="Takaki Y."/>
            <person name="Shimamura S."/>
            <person name="Reysenbach A.-L."/>
            <person name="Takai K."/>
            <person name="Horikoshi K."/>
        </authorList>
    </citation>
    <scope>NUCLEOTIDE SEQUENCE [LARGE SCALE GENOMIC DNA]</scope>
    <source>
        <strain>NBC37-1</strain>
    </source>
</reference>
<accession>A6Q9Z8</accession>
<dbReference type="EC" id="2.7.4.9" evidence="1"/>
<dbReference type="EMBL" id="AP009179">
    <property type="protein sequence ID" value="BAF72307.1"/>
    <property type="molecule type" value="Genomic_DNA"/>
</dbReference>
<dbReference type="RefSeq" id="WP_011981040.1">
    <property type="nucleotide sequence ID" value="NC_009663.1"/>
</dbReference>
<dbReference type="SMR" id="A6Q9Z8"/>
<dbReference type="STRING" id="387093.SUN_1354"/>
<dbReference type="KEGG" id="sun:SUN_1354"/>
<dbReference type="eggNOG" id="COG0125">
    <property type="taxonomic scope" value="Bacteria"/>
</dbReference>
<dbReference type="HOGENOM" id="CLU_049131_0_0_7"/>
<dbReference type="OrthoDB" id="9774907at2"/>
<dbReference type="Proteomes" id="UP000006378">
    <property type="component" value="Chromosome"/>
</dbReference>
<dbReference type="GO" id="GO:0005829">
    <property type="term" value="C:cytosol"/>
    <property type="evidence" value="ECO:0007669"/>
    <property type="project" value="TreeGrafter"/>
</dbReference>
<dbReference type="GO" id="GO:0005524">
    <property type="term" value="F:ATP binding"/>
    <property type="evidence" value="ECO:0007669"/>
    <property type="project" value="UniProtKB-UniRule"/>
</dbReference>
<dbReference type="GO" id="GO:0004798">
    <property type="term" value="F:dTMP kinase activity"/>
    <property type="evidence" value="ECO:0007669"/>
    <property type="project" value="UniProtKB-UniRule"/>
</dbReference>
<dbReference type="GO" id="GO:0006233">
    <property type="term" value="P:dTDP biosynthetic process"/>
    <property type="evidence" value="ECO:0007669"/>
    <property type="project" value="InterPro"/>
</dbReference>
<dbReference type="GO" id="GO:0006235">
    <property type="term" value="P:dTTP biosynthetic process"/>
    <property type="evidence" value="ECO:0007669"/>
    <property type="project" value="UniProtKB-UniRule"/>
</dbReference>
<dbReference type="GO" id="GO:0006227">
    <property type="term" value="P:dUDP biosynthetic process"/>
    <property type="evidence" value="ECO:0007669"/>
    <property type="project" value="TreeGrafter"/>
</dbReference>
<dbReference type="CDD" id="cd01672">
    <property type="entry name" value="TMPK"/>
    <property type="match status" value="1"/>
</dbReference>
<dbReference type="Gene3D" id="3.40.50.300">
    <property type="entry name" value="P-loop containing nucleotide triphosphate hydrolases"/>
    <property type="match status" value="1"/>
</dbReference>
<dbReference type="HAMAP" id="MF_00165">
    <property type="entry name" value="Thymidylate_kinase"/>
    <property type="match status" value="1"/>
</dbReference>
<dbReference type="InterPro" id="IPR027417">
    <property type="entry name" value="P-loop_NTPase"/>
</dbReference>
<dbReference type="InterPro" id="IPR039430">
    <property type="entry name" value="Thymidylate_kin-like_dom"/>
</dbReference>
<dbReference type="InterPro" id="IPR018094">
    <property type="entry name" value="Thymidylate_kinase"/>
</dbReference>
<dbReference type="NCBIfam" id="TIGR00041">
    <property type="entry name" value="DTMP_kinase"/>
    <property type="match status" value="1"/>
</dbReference>
<dbReference type="PANTHER" id="PTHR10344">
    <property type="entry name" value="THYMIDYLATE KINASE"/>
    <property type="match status" value="1"/>
</dbReference>
<dbReference type="PANTHER" id="PTHR10344:SF4">
    <property type="entry name" value="UMP-CMP KINASE 2, MITOCHONDRIAL"/>
    <property type="match status" value="1"/>
</dbReference>
<dbReference type="Pfam" id="PF02223">
    <property type="entry name" value="Thymidylate_kin"/>
    <property type="match status" value="1"/>
</dbReference>
<dbReference type="SUPFAM" id="SSF52540">
    <property type="entry name" value="P-loop containing nucleoside triphosphate hydrolases"/>
    <property type="match status" value="1"/>
</dbReference>